<comment type="similarity">
    <text evidence="1">Belongs to the bacterial ribosomal protein bL35 family.</text>
</comment>
<protein>
    <recommendedName>
        <fullName evidence="1">Large ribosomal subunit protein bL35</fullName>
    </recommendedName>
    <alternativeName>
        <fullName evidence="3">50S ribosomal protein L35</fullName>
    </alternativeName>
</protein>
<sequence length="66" mass="7496">MPKQKTHRGAAKRFKKTGSGKLKRSHAYTSHLFANKSTKAKRKLRKAGVVSAGDFKRIRQMLDNLK</sequence>
<dbReference type="EMBL" id="CP001215">
    <property type="protein sequence ID" value="ACP15250.1"/>
    <property type="molecule type" value="Genomic_DNA"/>
</dbReference>
<dbReference type="RefSeq" id="WP_001125945.1">
    <property type="nucleotide sequence ID" value="NC_012581.1"/>
</dbReference>
<dbReference type="SMR" id="C3L8V2"/>
<dbReference type="GeneID" id="93006536"/>
<dbReference type="KEGG" id="bah:BAMEG_4848"/>
<dbReference type="HOGENOM" id="CLU_169643_3_0_9"/>
<dbReference type="GO" id="GO:0022625">
    <property type="term" value="C:cytosolic large ribosomal subunit"/>
    <property type="evidence" value="ECO:0007669"/>
    <property type="project" value="TreeGrafter"/>
</dbReference>
<dbReference type="GO" id="GO:0003735">
    <property type="term" value="F:structural constituent of ribosome"/>
    <property type="evidence" value="ECO:0007669"/>
    <property type="project" value="InterPro"/>
</dbReference>
<dbReference type="GO" id="GO:0006412">
    <property type="term" value="P:translation"/>
    <property type="evidence" value="ECO:0007669"/>
    <property type="project" value="UniProtKB-UniRule"/>
</dbReference>
<dbReference type="FunFam" id="4.10.410.60:FF:000001">
    <property type="entry name" value="50S ribosomal protein L35"/>
    <property type="match status" value="1"/>
</dbReference>
<dbReference type="Gene3D" id="4.10.410.60">
    <property type="match status" value="1"/>
</dbReference>
<dbReference type="HAMAP" id="MF_00514">
    <property type="entry name" value="Ribosomal_bL35"/>
    <property type="match status" value="1"/>
</dbReference>
<dbReference type="InterPro" id="IPR001706">
    <property type="entry name" value="Ribosomal_bL35"/>
</dbReference>
<dbReference type="InterPro" id="IPR021137">
    <property type="entry name" value="Ribosomal_bL35-like"/>
</dbReference>
<dbReference type="InterPro" id="IPR018265">
    <property type="entry name" value="Ribosomal_bL35_CS"/>
</dbReference>
<dbReference type="InterPro" id="IPR037229">
    <property type="entry name" value="Ribosomal_bL35_sf"/>
</dbReference>
<dbReference type="NCBIfam" id="TIGR00001">
    <property type="entry name" value="rpmI_bact"/>
    <property type="match status" value="1"/>
</dbReference>
<dbReference type="PANTHER" id="PTHR33343">
    <property type="entry name" value="54S RIBOSOMAL PROTEIN BL35M"/>
    <property type="match status" value="1"/>
</dbReference>
<dbReference type="PANTHER" id="PTHR33343:SF1">
    <property type="entry name" value="LARGE RIBOSOMAL SUBUNIT PROTEIN BL35M"/>
    <property type="match status" value="1"/>
</dbReference>
<dbReference type="Pfam" id="PF01632">
    <property type="entry name" value="Ribosomal_L35p"/>
    <property type="match status" value="1"/>
</dbReference>
<dbReference type="PRINTS" id="PR00064">
    <property type="entry name" value="RIBOSOMALL35"/>
</dbReference>
<dbReference type="SUPFAM" id="SSF143034">
    <property type="entry name" value="L35p-like"/>
    <property type="match status" value="1"/>
</dbReference>
<dbReference type="PROSITE" id="PS00936">
    <property type="entry name" value="RIBOSOMAL_L35"/>
    <property type="match status" value="1"/>
</dbReference>
<feature type="chain" id="PRO_1000146119" description="Large ribosomal subunit protein bL35">
    <location>
        <begin position="1"/>
        <end position="66"/>
    </location>
</feature>
<feature type="region of interest" description="Disordered" evidence="2">
    <location>
        <begin position="1"/>
        <end position="26"/>
    </location>
</feature>
<keyword id="KW-0687">Ribonucleoprotein</keyword>
<keyword id="KW-0689">Ribosomal protein</keyword>
<accession>C3L8V2</accession>
<proteinExistence type="inferred from homology"/>
<evidence type="ECO:0000255" key="1">
    <source>
        <dbReference type="HAMAP-Rule" id="MF_00514"/>
    </source>
</evidence>
<evidence type="ECO:0000256" key="2">
    <source>
        <dbReference type="SAM" id="MobiDB-lite"/>
    </source>
</evidence>
<evidence type="ECO:0000305" key="3"/>
<reference key="1">
    <citation type="submission" date="2008-10" db="EMBL/GenBank/DDBJ databases">
        <title>Genome sequence of Bacillus anthracis str. CDC 684.</title>
        <authorList>
            <person name="Dodson R.J."/>
            <person name="Munk A.C."/>
            <person name="Brettin T."/>
            <person name="Bruce D."/>
            <person name="Detter C."/>
            <person name="Tapia R."/>
            <person name="Han C."/>
            <person name="Sutton G."/>
            <person name="Sims D."/>
        </authorList>
    </citation>
    <scope>NUCLEOTIDE SEQUENCE [LARGE SCALE GENOMIC DNA]</scope>
    <source>
        <strain>CDC 684 / NRRL 3495</strain>
    </source>
</reference>
<gene>
    <name evidence="1" type="primary">rpmI</name>
    <name type="ordered locus">BAMEG_4848</name>
</gene>
<organism>
    <name type="scientific">Bacillus anthracis (strain CDC 684 / NRRL 3495)</name>
    <dbReference type="NCBI Taxonomy" id="568206"/>
    <lineage>
        <taxon>Bacteria</taxon>
        <taxon>Bacillati</taxon>
        <taxon>Bacillota</taxon>
        <taxon>Bacilli</taxon>
        <taxon>Bacillales</taxon>
        <taxon>Bacillaceae</taxon>
        <taxon>Bacillus</taxon>
        <taxon>Bacillus cereus group</taxon>
    </lineage>
</organism>
<name>RL35_BACAC</name>